<keyword id="KW-0342">GTP-binding</keyword>
<keyword id="KW-0378">Hydrolase</keyword>
<keyword id="KW-0479">Metal-binding</keyword>
<keyword id="KW-0547">Nucleotide-binding</keyword>
<keyword id="KW-0686">Riboflavin biosynthesis</keyword>
<keyword id="KW-0862">Zinc</keyword>
<feature type="chain" id="PRO_1000203812" description="GTP cyclohydrolase-2">
    <location>
        <begin position="1"/>
        <end position="196"/>
    </location>
</feature>
<feature type="active site" description="Proton acceptor" evidence="1">
    <location>
        <position position="126"/>
    </location>
</feature>
<feature type="active site" description="Nucleophile" evidence="1">
    <location>
        <position position="128"/>
    </location>
</feature>
<feature type="binding site" evidence="1">
    <location>
        <begin position="49"/>
        <end position="53"/>
    </location>
    <ligand>
        <name>GTP</name>
        <dbReference type="ChEBI" id="CHEBI:37565"/>
    </ligand>
</feature>
<feature type="binding site" evidence="1">
    <location>
        <position position="54"/>
    </location>
    <ligand>
        <name>Zn(2+)</name>
        <dbReference type="ChEBI" id="CHEBI:29105"/>
        <note>catalytic</note>
    </ligand>
</feature>
<feature type="binding site" evidence="1">
    <location>
        <position position="65"/>
    </location>
    <ligand>
        <name>Zn(2+)</name>
        <dbReference type="ChEBI" id="CHEBI:29105"/>
        <note>catalytic</note>
    </ligand>
</feature>
<feature type="binding site" evidence="1">
    <location>
        <position position="67"/>
    </location>
    <ligand>
        <name>Zn(2+)</name>
        <dbReference type="ChEBI" id="CHEBI:29105"/>
        <note>catalytic</note>
    </ligand>
</feature>
<feature type="binding site" evidence="1">
    <location>
        <position position="70"/>
    </location>
    <ligand>
        <name>GTP</name>
        <dbReference type="ChEBI" id="CHEBI:37565"/>
    </ligand>
</feature>
<feature type="binding site" evidence="1">
    <location>
        <begin position="92"/>
        <end position="94"/>
    </location>
    <ligand>
        <name>GTP</name>
        <dbReference type="ChEBI" id="CHEBI:37565"/>
    </ligand>
</feature>
<feature type="binding site" evidence="1">
    <location>
        <position position="114"/>
    </location>
    <ligand>
        <name>GTP</name>
        <dbReference type="ChEBI" id="CHEBI:37565"/>
    </ligand>
</feature>
<feature type="binding site" evidence="1">
    <location>
        <position position="149"/>
    </location>
    <ligand>
        <name>GTP</name>
        <dbReference type="ChEBI" id="CHEBI:37565"/>
    </ligand>
</feature>
<feature type="binding site" evidence="1">
    <location>
        <position position="154"/>
    </location>
    <ligand>
        <name>GTP</name>
        <dbReference type="ChEBI" id="CHEBI:37565"/>
    </ligand>
</feature>
<reference key="1">
    <citation type="journal article" date="2009" name="J. Bacteriol.">
        <title>Genomic sequencing reveals regulatory mutations and recombinational events in the widely used MC4100 lineage of Escherichia coli K-12.</title>
        <authorList>
            <person name="Ferenci T."/>
            <person name="Zhou Z."/>
            <person name="Betteridge T."/>
            <person name="Ren Y."/>
            <person name="Liu Y."/>
            <person name="Feng L."/>
            <person name="Reeves P.R."/>
            <person name="Wang L."/>
        </authorList>
    </citation>
    <scope>NUCLEOTIDE SEQUENCE [LARGE SCALE GENOMIC DNA]</scope>
    <source>
        <strain>K12 / MC4100 / BW2952</strain>
    </source>
</reference>
<sequence>MQLKRVAEAKLPTPWGDFLMVGFEELATGHDHVALVYGDISGHTPVLARVHSECLTGDALFSLRCDCGFQLEAALTQIAEEGRGILLYHRQEGRNIGLLNKIRAYALQDQGYDTVEANHQLGFAADERDFTLCADMFKLLGVNEVRLLTNNPKKVEILTEAGINIVERVPLIVGRNPNNEHYLDTKAEKMGHLLNK</sequence>
<comment type="function">
    <text evidence="1">Catalyzes the conversion of GTP to 2,5-diamino-6-ribosylamino-4(3H)-pyrimidinone 5'-phosphate (DARP), formate and pyrophosphate.</text>
</comment>
<comment type="catalytic activity">
    <reaction evidence="1">
        <text>GTP + 4 H2O = 2,5-diamino-6-hydroxy-4-(5-phosphoribosylamino)-pyrimidine + formate + 2 phosphate + 3 H(+)</text>
        <dbReference type="Rhea" id="RHEA:23704"/>
        <dbReference type="ChEBI" id="CHEBI:15377"/>
        <dbReference type="ChEBI" id="CHEBI:15378"/>
        <dbReference type="ChEBI" id="CHEBI:15740"/>
        <dbReference type="ChEBI" id="CHEBI:37565"/>
        <dbReference type="ChEBI" id="CHEBI:43474"/>
        <dbReference type="ChEBI" id="CHEBI:58614"/>
        <dbReference type="EC" id="3.5.4.25"/>
    </reaction>
</comment>
<comment type="cofactor">
    <cofactor evidence="1">
        <name>Zn(2+)</name>
        <dbReference type="ChEBI" id="CHEBI:29105"/>
    </cofactor>
    <text evidence="1">Binds 1 zinc ion per subunit.</text>
</comment>
<comment type="pathway">
    <text evidence="1">Cofactor biosynthesis; riboflavin biosynthesis; 5-amino-6-(D-ribitylamino)uracil from GTP: step 1/4.</text>
</comment>
<comment type="subunit">
    <text evidence="1">Homodimer.</text>
</comment>
<comment type="similarity">
    <text evidence="1">Belongs to the GTP cyclohydrolase II family.</text>
</comment>
<gene>
    <name evidence="1" type="primary">ribA</name>
    <name type="ordered locus">BWG_1108</name>
</gene>
<dbReference type="EC" id="3.5.4.25" evidence="1"/>
<dbReference type="EMBL" id="CP001396">
    <property type="protein sequence ID" value="ACR63384.1"/>
    <property type="molecule type" value="Genomic_DNA"/>
</dbReference>
<dbReference type="RefSeq" id="WP_001176295.1">
    <property type="nucleotide sequence ID" value="NC_012759.1"/>
</dbReference>
<dbReference type="SMR" id="C4ZTX2"/>
<dbReference type="GeneID" id="86946614"/>
<dbReference type="KEGG" id="ebw:BWG_1108"/>
<dbReference type="HOGENOM" id="CLU_020273_2_1_6"/>
<dbReference type="UniPathway" id="UPA00275">
    <property type="reaction ID" value="UER00400"/>
</dbReference>
<dbReference type="GO" id="GO:0005829">
    <property type="term" value="C:cytosol"/>
    <property type="evidence" value="ECO:0007669"/>
    <property type="project" value="TreeGrafter"/>
</dbReference>
<dbReference type="GO" id="GO:0005525">
    <property type="term" value="F:GTP binding"/>
    <property type="evidence" value="ECO:0007669"/>
    <property type="project" value="UniProtKB-KW"/>
</dbReference>
<dbReference type="GO" id="GO:0003935">
    <property type="term" value="F:GTP cyclohydrolase II activity"/>
    <property type="evidence" value="ECO:0007669"/>
    <property type="project" value="UniProtKB-UniRule"/>
</dbReference>
<dbReference type="GO" id="GO:0008270">
    <property type="term" value="F:zinc ion binding"/>
    <property type="evidence" value="ECO:0007669"/>
    <property type="project" value="UniProtKB-UniRule"/>
</dbReference>
<dbReference type="GO" id="GO:0009231">
    <property type="term" value="P:riboflavin biosynthetic process"/>
    <property type="evidence" value="ECO:0007669"/>
    <property type="project" value="UniProtKB-UniRule"/>
</dbReference>
<dbReference type="CDD" id="cd00641">
    <property type="entry name" value="GTP_cyclohydro2"/>
    <property type="match status" value="1"/>
</dbReference>
<dbReference type="FunFam" id="3.40.50.10990:FF:000002">
    <property type="entry name" value="GTP cyclohydrolase-2"/>
    <property type="match status" value="1"/>
</dbReference>
<dbReference type="Gene3D" id="3.40.50.10990">
    <property type="entry name" value="GTP cyclohydrolase II"/>
    <property type="match status" value="1"/>
</dbReference>
<dbReference type="HAMAP" id="MF_00179">
    <property type="entry name" value="RibA"/>
    <property type="match status" value="1"/>
</dbReference>
<dbReference type="InterPro" id="IPR032677">
    <property type="entry name" value="GTP_cyclohydro_II"/>
</dbReference>
<dbReference type="InterPro" id="IPR000926">
    <property type="entry name" value="RibA"/>
</dbReference>
<dbReference type="InterPro" id="IPR036144">
    <property type="entry name" value="RibA-like_sf"/>
</dbReference>
<dbReference type="NCBIfam" id="NF001591">
    <property type="entry name" value="PRK00393.1"/>
    <property type="match status" value="1"/>
</dbReference>
<dbReference type="NCBIfam" id="TIGR00505">
    <property type="entry name" value="ribA"/>
    <property type="match status" value="1"/>
</dbReference>
<dbReference type="PANTHER" id="PTHR21327:SF18">
    <property type="entry name" value="3,4-DIHYDROXY-2-BUTANONE 4-PHOSPHATE SYNTHASE"/>
    <property type="match status" value="1"/>
</dbReference>
<dbReference type="PANTHER" id="PTHR21327">
    <property type="entry name" value="GTP CYCLOHYDROLASE II-RELATED"/>
    <property type="match status" value="1"/>
</dbReference>
<dbReference type="Pfam" id="PF00925">
    <property type="entry name" value="GTP_cyclohydro2"/>
    <property type="match status" value="1"/>
</dbReference>
<dbReference type="SUPFAM" id="SSF142695">
    <property type="entry name" value="RibA-like"/>
    <property type="match status" value="1"/>
</dbReference>
<name>RIBA_ECOBW</name>
<accession>C4ZTX2</accession>
<proteinExistence type="inferred from homology"/>
<protein>
    <recommendedName>
        <fullName evidence="1">GTP cyclohydrolase-2</fullName>
        <ecNumber evidence="1">3.5.4.25</ecNumber>
    </recommendedName>
    <alternativeName>
        <fullName evidence="1">GTP cyclohydrolase II</fullName>
    </alternativeName>
</protein>
<evidence type="ECO:0000255" key="1">
    <source>
        <dbReference type="HAMAP-Rule" id="MF_00179"/>
    </source>
</evidence>
<organism>
    <name type="scientific">Escherichia coli (strain K12 / MC4100 / BW2952)</name>
    <dbReference type="NCBI Taxonomy" id="595496"/>
    <lineage>
        <taxon>Bacteria</taxon>
        <taxon>Pseudomonadati</taxon>
        <taxon>Pseudomonadota</taxon>
        <taxon>Gammaproteobacteria</taxon>
        <taxon>Enterobacterales</taxon>
        <taxon>Enterobacteriaceae</taxon>
        <taxon>Escherichia</taxon>
    </lineage>
</organism>